<sequence length="162" mass="17872">MATIFFIQPITEEAEAYYPPSMITNKRKDLGVDVYCCSNLVLQPGLNIIPLHIKVACEHMGKKCGFKIMARSSMCTHERLLILANGIGLIDPGYVGELMLKIINLGDIPVQIWAKECLVQLVAQGDHVPDHINILKRNEIFPLFAPTPRGEGRFGSTGKAGL</sequence>
<gene>
    <name type="ordered locus">Mal-139</name>
    <name type="ORF">k1R</name>
</gene>
<proteinExistence type="inferred from homology"/>
<organismHost>
    <name type="scientific">Ornithodoros</name>
    <name type="common">relapsing fever ticks</name>
    <dbReference type="NCBI Taxonomy" id="6937"/>
</organismHost>
<organismHost>
    <name type="scientific">Phacochoerus aethiopicus</name>
    <name type="common">Warthog</name>
    <dbReference type="NCBI Taxonomy" id="85517"/>
</organismHost>
<organismHost>
    <name type="scientific">Phacochoerus africanus</name>
    <name type="common">Warthog</name>
    <dbReference type="NCBI Taxonomy" id="41426"/>
</organismHost>
<organismHost>
    <name type="scientific">Potamochoerus larvatus</name>
    <name type="common">Bushpig</name>
    <dbReference type="NCBI Taxonomy" id="273792"/>
</organismHost>
<organismHost>
    <name type="scientific">Sus scrofa</name>
    <name type="common">Pig</name>
    <dbReference type="NCBI Taxonomy" id="9823"/>
</organismHost>
<name>DUTP_ASFM2</name>
<accession>Q65243</accession>
<comment type="function">
    <text evidence="1">The viral dUTPase may play a role in lowering the dUTP concentration in natural infections to minimize misincorporation of deoxyuridine into the viral DNA and ensure the fidelity of genome replication.</text>
</comment>
<comment type="catalytic activity">
    <reaction>
        <text>dUTP + H2O = dUMP + diphosphate + H(+)</text>
        <dbReference type="Rhea" id="RHEA:10248"/>
        <dbReference type="ChEBI" id="CHEBI:15377"/>
        <dbReference type="ChEBI" id="CHEBI:15378"/>
        <dbReference type="ChEBI" id="CHEBI:33019"/>
        <dbReference type="ChEBI" id="CHEBI:61555"/>
        <dbReference type="ChEBI" id="CHEBI:246422"/>
        <dbReference type="EC" id="3.6.1.23"/>
    </reaction>
</comment>
<comment type="cofactor">
    <cofactor evidence="1">
        <name>Mg(2+)</name>
        <dbReference type="ChEBI" id="CHEBI:18420"/>
    </cofactor>
</comment>
<comment type="subunit">
    <text evidence="1">Homotrimer.</text>
</comment>
<comment type="subcellular location">
    <subcellularLocation>
        <location evidence="1">Host cytoplasm</location>
    </subcellularLocation>
    <subcellularLocation>
        <location evidence="1">Virion</location>
    </subcellularLocation>
    <text evidence="1">Found in association with viral nucleoid.</text>
</comment>
<comment type="induction">
    <text evidence="2">Expressed in the early phase of the viral replicative cycle.</text>
</comment>
<comment type="similarity">
    <text evidence="2">Belongs to the dUTPase family.</text>
</comment>
<evidence type="ECO:0000250" key="1">
    <source>
        <dbReference type="UniProtKB" id="Q65199"/>
    </source>
</evidence>
<evidence type="ECO:0000305" key="2"/>
<feature type="chain" id="PRO_0000373135" description="Deoxyuridine 5'-triphosphate nucleotidohydrolase">
    <location>
        <begin position="1"/>
        <end position="162"/>
    </location>
</feature>
<organism>
    <name type="scientific">African swine fever virus (isolate Tick/Malawi/Lil 20-1/1983)</name>
    <name type="common">ASFV</name>
    <dbReference type="NCBI Taxonomy" id="10500"/>
    <lineage>
        <taxon>Viruses</taxon>
        <taxon>Varidnaviria</taxon>
        <taxon>Bamfordvirae</taxon>
        <taxon>Nucleocytoviricota</taxon>
        <taxon>Pokkesviricetes</taxon>
        <taxon>Asfuvirales</taxon>
        <taxon>Asfarviridae</taxon>
        <taxon>Asfivirus</taxon>
        <taxon>African swine fever virus</taxon>
    </lineage>
</organism>
<protein>
    <recommendedName>
        <fullName>Deoxyuridine 5'-triphosphate nucleotidohydrolase</fullName>
        <shortName evidence="1">dUTPase</shortName>
        <ecNumber evidence="1">3.6.1.23</ecNumber>
    </recommendedName>
    <alternativeName>
        <fullName>dUTP pyrophosphatase</fullName>
    </alternativeName>
</protein>
<keyword id="KW-1035">Host cytoplasm</keyword>
<keyword id="KW-0378">Hydrolase</keyword>
<keyword id="KW-0460">Magnesium</keyword>
<keyword id="KW-0479">Metal-binding</keyword>
<keyword id="KW-0546">Nucleotide metabolism</keyword>
<keyword id="KW-0946">Virion</keyword>
<reference key="1">
    <citation type="journal article" date="1994" name="J. Gen. Virol.">
        <title>Nucleotide sequence of a 55 kbp region from the right end of the genome of a pathogenic African swine fever virus isolate (Malawi LIL20/1).</title>
        <authorList>
            <person name="Dixon L.K."/>
            <person name="Twigg S.R.F."/>
            <person name="Baylis S.A."/>
            <person name="Vydelingum S."/>
            <person name="Bristow C."/>
            <person name="Hammond J.M."/>
            <person name="Smith G.L."/>
        </authorList>
    </citation>
    <scope>NUCLEOTIDE SEQUENCE [GENOMIC DNA]</scope>
</reference>
<reference key="2">
    <citation type="submission" date="2003-03" db="EMBL/GenBank/DDBJ databases">
        <title>African swine fever virus genomes.</title>
        <authorList>
            <person name="Kutish G.F."/>
            <person name="Rock D.L."/>
        </authorList>
    </citation>
    <scope>NUCLEOTIDE SEQUENCE [LARGE SCALE GENOMIC DNA]</scope>
</reference>
<dbReference type="EC" id="3.6.1.23" evidence="1"/>
<dbReference type="EMBL" id="X71982">
    <property type="protein sequence ID" value="CAA50839.1"/>
    <property type="molecule type" value="Genomic_DNA"/>
</dbReference>
<dbReference type="EMBL" id="AY261361">
    <property type="status" value="NOT_ANNOTATED_CDS"/>
    <property type="molecule type" value="Genomic_DNA"/>
</dbReference>
<dbReference type="SMR" id="Q65243"/>
<dbReference type="Proteomes" id="UP000000860">
    <property type="component" value="Segment"/>
</dbReference>
<dbReference type="GO" id="GO:0030430">
    <property type="term" value="C:host cell cytoplasm"/>
    <property type="evidence" value="ECO:0007669"/>
    <property type="project" value="UniProtKB-SubCell"/>
</dbReference>
<dbReference type="GO" id="GO:0044423">
    <property type="term" value="C:virion component"/>
    <property type="evidence" value="ECO:0007669"/>
    <property type="project" value="UniProtKB-KW"/>
</dbReference>
<dbReference type="GO" id="GO:0004170">
    <property type="term" value="F:dUTP diphosphatase activity"/>
    <property type="evidence" value="ECO:0007669"/>
    <property type="project" value="UniProtKB-EC"/>
</dbReference>
<dbReference type="GO" id="GO:0046872">
    <property type="term" value="F:metal ion binding"/>
    <property type="evidence" value="ECO:0007669"/>
    <property type="project" value="UniProtKB-KW"/>
</dbReference>
<dbReference type="GO" id="GO:0009117">
    <property type="term" value="P:nucleotide metabolic process"/>
    <property type="evidence" value="ECO:0007669"/>
    <property type="project" value="UniProtKB-KW"/>
</dbReference>
<dbReference type="CDD" id="cd07557">
    <property type="entry name" value="trimeric_dUTPase"/>
    <property type="match status" value="1"/>
</dbReference>
<dbReference type="Gene3D" id="2.70.40.10">
    <property type="match status" value="1"/>
</dbReference>
<dbReference type="InterPro" id="IPR029054">
    <property type="entry name" value="dUTPase-like"/>
</dbReference>
<dbReference type="InterPro" id="IPR036157">
    <property type="entry name" value="dUTPase-like_sf"/>
</dbReference>
<dbReference type="InterPro" id="IPR033704">
    <property type="entry name" value="dUTPase_trimeric"/>
</dbReference>
<dbReference type="Pfam" id="PF00692">
    <property type="entry name" value="dUTPase"/>
    <property type="match status" value="1"/>
</dbReference>
<dbReference type="SUPFAM" id="SSF51283">
    <property type="entry name" value="dUTPase-like"/>
    <property type="match status" value="1"/>
</dbReference>